<proteinExistence type="inferred from homology"/>
<reference key="1">
    <citation type="submission" date="2008-01" db="EMBL/GenBank/DDBJ databases">
        <title>Complete sequence of Pseudomonas putida GB-1.</title>
        <authorList>
            <consortium name="US DOE Joint Genome Institute"/>
            <person name="Copeland A."/>
            <person name="Lucas S."/>
            <person name="Lapidus A."/>
            <person name="Barry K."/>
            <person name="Glavina del Rio T."/>
            <person name="Dalin E."/>
            <person name="Tice H."/>
            <person name="Pitluck S."/>
            <person name="Bruce D."/>
            <person name="Goodwin L."/>
            <person name="Chertkov O."/>
            <person name="Brettin T."/>
            <person name="Detter J.C."/>
            <person name="Han C."/>
            <person name="Kuske C.R."/>
            <person name="Schmutz J."/>
            <person name="Larimer F."/>
            <person name="Land M."/>
            <person name="Hauser L."/>
            <person name="Kyrpides N."/>
            <person name="Kim E."/>
            <person name="McCarthy J.K."/>
            <person name="Richardson P."/>
        </authorList>
    </citation>
    <scope>NUCLEOTIDE SEQUENCE [LARGE SCALE GENOMIC DNA]</scope>
    <source>
        <strain>GB-1</strain>
    </source>
</reference>
<protein>
    <recommendedName>
        <fullName evidence="1">Ribosome-recycling factor</fullName>
        <shortName evidence="1">RRF</shortName>
    </recommendedName>
    <alternativeName>
        <fullName evidence="1">Ribosome-releasing factor</fullName>
    </alternativeName>
</protein>
<name>RRF_PSEPG</name>
<gene>
    <name evidence="1" type="primary">frr</name>
    <name type="ordered locus">PputGB1_1149</name>
</gene>
<sequence>MINDIKKDAQERMTKSLEALGRNLAAIRTGRAHPSILDTVKVTAWGSEMPLNQVAAITVEDARTLKIVAHDKNLSAAIEKAILTSDLGLNPSSAGTTIRVPMPALTEETRKGYTKQASGVAEDAKVAVRNVRRDALADLKKLTKDKEISEDEERRAADEIQKLTDKFVAEVDAAFKAKEKDLMAV</sequence>
<dbReference type="EMBL" id="CP000926">
    <property type="protein sequence ID" value="ABY97057.1"/>
    <property type="molecule type" value="Genomic_DNA"/>
</dbReference>
<dbReference type="RefSeq" id="WP_012270837.1">
    <property type="nucleotide sequence ID" value="NC_010322.1"/>
</dbReference>
<dbReference type="SMR" id="B0KSA2"/>
<dbReference type="KEGG" id="ppg:PputGB1_1149"/>
<dbReference type="eggNOG" id="COG0233">
    <property type="taxonomic scope" value="Bacteria"/>
</dbReference>
<dbReference type="HOGENOM" id="CLU_073981_2_0_6"/>
<dbReference type="Proteomes" id="UP000002157">
    <property type="component" value="Chromosome"/>
</dbReference>
<dbReference type="GO" id="GO:0005829">
    <property type="term" value="C:cytosol"/>
    <property type="evidence" value="ECO:0007669"/>
    <property type="project" value="GOC"/>
</dbReference>
<dbReference type="GO" id="GO:0043023">
    <property type="term" value="F:ribosomal large subunit binding"/>
    <property type="evidence" value="ECO:0007669"/>
    <property type="project" value="TreeGrafter"/>
</dbReference>
<dbReference type="GO" id="GO:0002184">
    <property type="term" value="P:cytoplasmic translational termination"/>
    <property type="evidence" value="ECO:0007669"/>
    <property type="project" value="TreeGrafter"/>
</dbReference>
<dbReference type="CDD" id="cd00520">
    <property type="entry name" value="RRF"/>
    <property type="match status" value="1"/>
</dbReference>
<dbReference type="FunFam" id="1.10.132.20:FF:000001">
    <property type="entry name" value="Ribosome-recycling factor"/>
    <property type="match status" value="1"/>
</dbReference>
<dbReference type="FunFam" id="3.30.1360.40:FF:000001">
    <property type="entry name" value="Ribosome-recycling factor"/>
    <property type="match status" value="1"/>
</dbReference>
<dbReference type="Gene3D" id="3.30.1360.40">
    <property type="match status" value="1"/>
</dbReference>
<dbReference type="Gene3D" id="1.10.132.20">
    <property type="entry name" value="Ribosome-recycling factor"/>
    <property type="match status" value="1"/>
</dbReference>
<dbReference type="HAMAP" id="MF_00040">
    <property type="entry name" value="RRF"/>
    <property type="match status" value="1"/>
</dbReference>
<dbReference type="InterPro" id="IPR002661">
    <property type="entry name" value="Ribosome_recyc_fac"/>
</dbReference>
<dbReference type="InterPro" id="IPR023584">
    <property type="entry name" value="Ribosome_recyc_fac_dom"/>
</dbReference>
<dbReference type="InterPro" id="IPR036191">
    <property type="entry name" value="RRF_sf"/>
</dbReference>
<dbReference type="NCBIfam" id="TIGR00496">
    <property type="entry name" value="frr"/>
    <property type="match status" value="1"/>
</dbReference>
<dbReference type="PANTHER" id="PTHR20982:SF3">
    <property type="entry name" value="MITOCHONDRIAL RIBOSOME RECYCLING FACTOR PSEUDO 1"/>
    <property type="match status" value="1"/>
</dbReference>
<dbReference type="PANTHER" id="PTHR20982">
    <property type="entry name" value="RIBOSOME RECYCLING FACTOR"/>
    <property type="match status" value="1"/>
</dbReference>
<dbReference type="Pfam" id="PF01765">
    <property type="entry name" value="RRF"/>
    <property type="match status" value="1"/>
</dbReference>
<dbReference type="SUPFAM" id="SSF55194">
    <property type="entry name" value="Ribosome recycling factor, RRF"/>
    <property type="match status" value="1"/>
</dbReference>
<evidence type="ECO:0000255" key="1">
    <source>
        <dbReference type="HAMAP-Rule" id="MF_00040"/>
    </source>
</evidence>
<keyword id="KW-0963">Cytoplasm</keyword>
<keyword id="KW-0648">Protein biosynthesis</keyword>
<comment type="function">
    <text evidence="1">Responsible for the release of ribosomes from messenger RNA at the termination of protein biosynthesis. May increase the efficiency of translation by recycling ribosomes from one round of translation to another.</text>
</comment>
<comment type="subcellular location">
    <subcellularLocation>
        <location evidence="1">Cytoplasm</location>
    </subcellularLocation>
</comment>
<comment type="similarity">
    <text evidence="1">Belongs to the RRF family.</text>
</comment>
<feature type="chain" id="PRO_1000074592" description="Ribosome-recycling factor">
    <location>
        <begin position="1"/>
        <end position="185"/>
    </location>
</feature>
<accession>B0KSA2</accession>
<organism>
    <name type="scientific">Pseudomonas putida (strain GB-1)</name>
    <dbReference type="NCBI Taxonomy" id="76869"/>
    <lineage>
        <taxon>Bacteria</taxon>
        <taxon>Pseudomonadati</taxon>
        <taxon>Pseudomonadota</taxon>
        <taxon>Gammaproteobacteria</taxon>
        <taxon>Pseudomonadales</taxon>
        <taxon>Pseudomonadaceae</taxon>
        <taxon>Pseudomonas</taxon>
    </lineage>
</organism>